<keyword id="KW-0001">2Fe-2S</keyword>
<keyword id="KW-0002">3D-structure</keyword>
<keyword id="KW-0963">Cytoplasm</keyword>
<keyword id="KW-0903">Direct protein sequencing</keyword>
<keyword id="KW-0408">Iron</keyword>
<keyword id="KW-0411">Iron-sulfur</keyword>
<keyword id="KW-0479">Metal-binding</keyword>
<keyword id="KW-0663">Pyridoxal phosphate</keyword>
<keyword id="KW-1185">Reference proteome</keyword>
<keyword id="KW-0808">Transferase</keyword>
<keyword id="KW-0819">tRNA processing</keyword>
<gene>
    <name evidence="1" type="primary">iscS</name>
    <name type="synonym">nuvC</name>
    <name type="synonym">yfhO</name>
    <name type="synonym">yzzO</name>
    <name type="ordered locus">b2530</name>
    <name type="ordered locus">JW2514</name>
</gene>
<feature type="chain" id="PRO_0000150264" description="Cysteine desulfurase IscS">
    <location>
        <begin position="1"/>
        <end position="404"/>
    </location>
</feature>
<feature type="active site" description="Cysteine persulfide intermediate" evidence="1 10 13">
    <location>
        <position position="328"/>
    </location>
</feature>
<feature type="binding site" evidence="1">
    <location>
        <begin position="75"/>
        <end position="76"/>
    </location>
    <ligand>
        <name>pyridoxal 5'-phosphate</name>
        <dbReference type="ChEBI" id="CHEBI:597326"/>
    </ligand>
</feature>
<feature type="binding site" evidence="1">
    <location>
        <position position="155"/>
    </location>
    <ligand>
        <name>pyridoxal 5'-phosphate</name>
        <dbReference type="ChEBI" id="CHEBI:597326"/>
    </ligand>
</feature>
<feature type="binding site" evidence="1 10">
    <location>
        <position position="183"/>
    </location>
    <ligand>
        <name>pyridoxal 5'-phosphate</name>
        <dbReference type="ChEBI" id="CHEBI:597326"/>
    </ligand>
</feature>
<feature type="binding site" evidence="1 10">
    <location>
        <begin position="203"/>
        <end position="205"/>
    </location>
    <ligand>
        <name>pyridoxal 5'-phosphate</name>
        <dbReference type="ChEBI" id="CHEBI:597326"/>
    </ligand>
</feature>
<feature type="binding site" evidence="1 10">
    <location>
        <position position="243"/>
    </location>
    <ligand>
        <name>pyridoxal 5'-phosphate</name>
        <dbReference type="ChEBI" id="CHEBI:597326"/>
    </ligand>
</feature>
<feature type="binding site" description="via persulfide group" evidence="1">
    <location>
        <position position="328"/>
    </location>
    <ligand>
        <name>[2Fe-2S] cluster</name>
        <dbReference type="ChEBI" id="CHEBI:190135"/>
        <note>ligand shared with IscU</note>
    </ligand>
</feature>
<feature type="modified residue" description="N6-(pyridoxal phosphate)lysine" evidence="1 10">
    <location>
        <position position="206"/>
    </location>
</feature>
<feature type="mutagenesis site" description="Loss of cysteine desulfurization." evidence="4">
    <original>C</original>
    <variation>A</variation>
    <location>
        <position position="328"/>
    </location>
</feature>
<feature type="mutagenesis site" description="Normal cysteine desulfurase activity, decreased binding to IscU, decreased sulfur transfer to IscU, decreased Fe-S cluster assembly." evidence="9">
    <location>
        <begin position="376"/>
        <end position="404"/>
    </location>
</feature>
<feature type="sequence conflict" description="In Ref. 4; AA sequence." evidence="17" ref="4">
    <original>G</original>
    <variation>D</variation>
    <location>
        <position position="31"/>
    </location>
</feature>
<feature type="sequence conflict" description="In Ref. 4; AA sequence." evidence="17" ref="4">
    <original>G</original>
    <variation>F</variation>
    <location>
        <position position="34"/>
    </location>
</feature>
<feature type="sequence conflict" description="In Ref. 4; AA sequence." evidence="17" ref="4">
    <original>AS</original>
    <variation>NA</variation>
    <location>
        <begin position="37"/>
        <end position="38"/>
    </location>
</feature>
<feature type="sequence conflict" description="In Ref. 4; AA sequence." evidence="17" ref="4">
    <original>G</original>
    <variation>L</variation>
    <location>
        <position position="118"/>
    </location>
</feature>
<feature type="sequence conflict" description="In Ref. 4; AA sequence." evidence="17" ref="4">
    <original>P</original>
    <variation>M</variation>
    <location>
        <position position="126"/>
    </location>
</feature>
<feature type="sequence conflict" description="In Ref. 4; AA sequence." evidence="17" ref="4">
    <original>L</original>
    <variation>I</variation>
    <location>
        <position position="320"/>
    </location>
</feature>
<feature type="sequence conflict" description="In Ref. 4; AA sequence." evidence="17" ref="4">
    <original>SA</original>
    <variation>YL</variation>
    <location>
        <begin position="326"/>
        <end position="327"/>
    </location>
</feature>
<feature type="sequence conflict" description="In Ref. 4; AA sequence." evidence="17" ref="4">
    <original>L</original>
    <variation>V</variation>
    <location>
        <position position="339"/>
    </location>
</feature>
<feature type="strand" evidence="19">
    <location>
        <begin position="4"/>
        <end position="6"/>
    </location>
</feature>
<feature type="turn" evidence="19">
    <location>
        <begin position="9"/>
        <end position="11"/>
    </location>
</feature>
<feature type="helix" evidence="19">
    <location>
        <begin position="17"/>
        <end position="23"/>
    </location>
</feature>
<feature type="helix" evidence="19">
    <location>
        <begin position="24"/>
        <end position="26"/>
    </location>
</feature>
<feature type="helix" evidence="19">
    <location>
        <begin position="42"/>
        <end position="62"/>
    </location>
</feature>
<feature type="helix" evidence="19">
    <location>
        <begin position="66"/>
        <end position="68"/>
    </location>
</feature>
<feature type="strand" evidence="19">
    <location>
        <begin position="69"/>
        <end position="73"/>
    </location>
</feature>
<feature type="helix" evidence="19">
    <location>
        <begin position="75"/>
        <end position="90"/>
    </location>
</feature>
<feature type="helix" evidence="19">
    <location>
        <begin position="91"/>
        <end position="93"/>
    </location>
</feature>
<feature type="strand" evidence="19">
    <location>
        <begin position="96"/>
        <end position="100"/>
    </location>
</feature>
<feature type="helix" evidence="19">
    <location>
        <begin position="105"/>
        <end position="116"/>
    </location>
</feature>
<feature type="strand" evidence="19">
    <location>
        <begin position="120"/>
        <end position="124"/>
    </location>
</feature>
<feature type="helix" evidence="19">
    <location>
        <begin position="134"/>
        <end position="140"/>
    </location>
</feature>
<feature type="strand" evidence="19">
    <location>
        <begin position="145"/>
        <end position="149"/>
    </location>
</feature>
<feature type="turn" evidence="19">
    <location>
        <begin position="155"/>
        <end position="157"/>
    </location>
</feature>
<feature type="helix" evidence="19">
    <location>
        <begin position="163"/>
        <end position="173"/>
    </location>
</feature>
<feature type="strand" evidence="19">
    <location>
        <begin position="176"/>
        <end position="180"/>
    </location>
</feature>
<feature type="turn" evidence="19">
    <location>
        <begin position="182"/>
        <end position="187"/>
    </location>
</feature>
<feature type="turn" evidence="19">
    <location>
        <begin position="192"/>
        <end position="194"/>
    </location>
</feature>
<feature type="strand" evidence="19">
    <location>
        <begin position="198"/>
        <end position="204"/>
    </location>
</feature>
<feature type="turn" evidence="19">
    <location>
        <begin position="205"/>
        <end position="208"/>
    </location>
</feature>
<feature type="strand" evidence="19">
    <location>
        <begin position="214"/>
        <end position="218"/>
    </location>
</feature>
<feature type="turn" evidence="19">
    <location>
        <begin position="220"/>
        <end position="223"/>
    </location>
</feature>
<feature type="turn" evidence="19">
    <location>
        <begin position="235"/>
        <end position="239"/>
    </location>
</feature>
<feature type="helix" evidence="19">
    <location>
        <begin position="246"/>
        <end position="279"/>
    </location>
</feature>
<feature type="turn" evidence="19">
    <location>
        <begin position="280"/>
        <end position="283"/>
    </location>
</feature>
<feature type="strand" evidence="19">
    <location>
        <begin position="287"/>
        <end position="291"/>
    </location>
</feature>
<feature type="turn" evidence="19">
    <location>
        <begin position="293"/>
        <end position="295"/>
    </location>
</feature>
<feature type="strand" evidence="19">
    <location>
        <begin position="300"/>
        <end position="305"/>
    </location>
</feature>
<feature type="helix" evidence="19">
    <location>
        <begin position="310"/>
        <end position="316"/>
    </location>
</feature>
<feature type="turn" evidence="19">
    <location>
        <begin position="317"/>
        <end position="319"/>
    </location>
</feature>
<feature type="helix" evidence="19">
    <location>
        <begin position="337"/>
        <end position="342"/>
    </location>
</feature>
<feature type="helix" evidence="19">
    <location>
        <begin position="346"/>
        <end position="350"/>
    </location>
</feature>
<feature type="strand" evidence="19">
    <location>
        <begin position="352"/>
        <end position="356"/>
    </location>
</feature>
<feature type="helix" evidence="19">
    <location>
        <begin position="363"/>
        <end position="382"/>
    </location>
</feature>
<feature type="helix" evidence="19">
    <location>
        <begin position="385"/>
        <end position="390"/>
    </location>
</feature>
<accession>P0A6B7</accession>
<accession>P39171</accession>
<accession>P76581</accession>
<accession>P76992</accession>
<accession>Q8XA86</accession>
<organism>
    <name type="scientific">Escherichia coli (strain K12)</name>
    <dbReference type="NCBI Taxonomy" id="83333"/>
    <lineage>
        <taxon>Bacteria</taxon>
        <taxon>Pseudomonadati</taxon>
        <taxon>Pseudomonadota</taxon>
        <taxon>Gammaproteobacteria</taxon>
        <taxon>Enterobacterales</taxon>
        <taxon>Enterobacteriaceae</taxon>
        <taxon>Escherichia</taxon>
    </lineage>
</organism>
<reference key="1">
    <citation type="journal article" date="1997" name="DNA Res.">
        <title>Construction of a contiguous 874-kb sequence of the Escherichia coli-K12 genome corresponding to 50.0-68.8 min on the linkage map and analysis of its sequence features.</title>
        <authorList>
            <person name="Yamamoto Y."/>
            <person name="Aiba H."/>
            <person name="Baba T."/>
            <person name="Hayashi K."/>
            <person name="Inada T."/>
            <person name="Isono K."/>
            <person name="Itoh T."/>
            <person name="Kimura S."/>
            <person name="Kitagawa M."/>
            <person name="Makino K."/>
            <person name="Miki T."/>
            <person name="Mitsuhashi N."/>
            <person name="Mizobuchi K."/>
            <person name="Mori H."/>
            <person name="Nakade S."/>
            <person name="Nakamura Y."/>
            <person name="Nashimoto H."/>
            <person name="Oshima T."/>
            <person name="Oyama S."/>
            <person name="Saito N."/>
            <person name="Sampei G."/>
            <person name="Satoh Y."/>
            <person name="Sivasundaram S."/>
            <person name="Tagami H."/>
            <person name="Takahashi H."/>
            <person name="Takeda J."/>
            <person name="Takemoto K."/>
            <person name="Uehara K."/>
            <person name="Wada C."/>
            <person name="Yamagata S."/>
            <person name="Horiuchi T."/>
        </authorList>
    </citation>
    <scope>NUCLEOTIDE SEQUENCE [LARGE SCALE GENOMIC DNA]</scope>
    <source>
        <strain>K12 / W3110 / ATCC 27325 / DSM 5911</strain>
    </source>
</reference>
<reference key="2">
    <citation type="journal article" date="1997" name="Science">
        <title>The complete genome sequence of Escherichia coli K-12.</title>
        <authorList>
            <person name="Blattner F.R."/>
            <person name="Plunkett G. III"/>
            <person name="Bloch C.A."/>
            <person name="Perna N.T."/>
            <person name="Burland V."/>
            <person name="Riley M."/>
            <person name="Collado-Vides J."/>
            <person name="Glasner J.D."/>
            <person name="Rode C.K."/>
            <person name="Mayhew G.F."/>
            <person name="Gregor J."/>
            <person name="Davis N.W."/>
            <person name="Kirkpatrick H.A."/>
            <person name="Goeden M.A."/>
            <person name="Rose D.J."/>
            <person name="Mau B."/>
            <person name="Shao Y."/>
        </authorList>
    </citation>
    <scope>NUCLEOTIDE SEQUENCE [LARGE SCALE GENOMIC DNA]</scope>
    <source>
        <strain>K12 / MG1655 / ATCC 47076</strain>
    </source>
</reference>
<reference key="3">
    <citation type="journal article" date="2006" name="Mol. Syst. Biol.">
        <title>Highly accurate genome sequences of Escherichia coli K-12 strains MG1655 and W3110.</title>
        <authorList>
            <person name="Hayashi K."/>
            <person name="Morooka N."/>
            <person name="Yamamoto Y."/>
            <person name="Fujita K."/>
            <person name="Isono K."/>
            <person name="Choi S."/>
            <person name="Ohtsubo E."/>
            <person name="Baba T."/>
            <person name="Wanner B.L."/>
            <person name="Mori H."/>
            <person name="Horiuchi T."/>
        </authorList>
    </citation>
    <scope>NUCLEOTIDE SEQUENCE [LARGE SCALE GENOMIC DNA]</scope>
    <source>
        <strain>K12 / W3110 / ATCC 27325 / DSM 5911</strain>
    </source>
</reference>
<reference key="4">
    <citation type="journal article" date="1996" name="J. Biol. Chem.">
        <title>Escherichia coli contains a protein that is homologous in function and N-terminal sequence to the protein encoded by the nifS gene of Azotobacter vinelandii and that can participate in the synthesis of the Fe-S cluster of dihydroxy-acid dehydratase.</title>
        <authorList>
            <person name="Flint D.H."/>
        </authorList>
    </citation>
    <scope>PROTEIN SEQUENCE OF 1-38; 43-66; 117-127; 212-219; 241-257; 319-339 AND 382-391</scope>
    <scope>FUNCTION</scope>
    <scope>CATALYTIC ACTIVITY</scope>
    <scope>ACTIVE SITE</scope>
</reference>
<reference key="5">
    <citation type="journal article" date="1999" name="Biochemistry">
        <title>IscS is a sulfurtransferase for the in vitro biosynthesis of 4-thiouridine in Escherichia coli tRNA.</title>
        <authorList>
            <person name="Kambampati R."/>
            <person name="Lauhon C.T."/>
        </authorList>
    </citation>
    <scope>PROTEIN SEQUENCE OF 1-16</scope>
    <scope>FUNCTION</scope>
    <scope>COFACTOR</scope>
    <scope>ACTIVITY REGULATION</scope>
    <source>
        <strain>K12</strain>
    </source>
</reference>
<reference key="6">
    <citation type="journal article" date="1997" name="Electrophoresis">
        <title>Comparing the predicted and observed properties of proteins encoded in the genome of Escherichia coli K-12.</title>
        <authorList>
            <person name="Link A.J."/>
            <person name="Robison K."/>
            <person name="Church G.M."/>
        </authorList>
    </citation>
    <scope>PROTEIN SEQUENCE OF 1-12</scope>
    <source>
        <strain>K12 / EMG2</strain>
    </source>
</reference>
<reference key="7">
    <citation type="journal article" date="2000" name="J. Biochem.">
        <title>Kinetic and mutational studies of three NifS homologs from Escherichia coli: mechanistic difference between L-cysteine desulfurase and L-selenocysteine lyase reactions.</title>
        <authorList>
            <person name="Mihara H."/>
            <person name="Kurihara T."/>
            <person name="Yoshimura T."/>
            <person name="Esaki N."/>
        </authorList>
    </citation>
    <scope>PROTEIN SEQUENCE OF 1-9</scope>
    <scope>MUTAGENESIS OF CYS-328</scope>
    <source>
        <strain>K12</strain>
    </source>
</reference>
<reference key="8">
    <citation type="journal article" date="1999" name="J. Biochem.">
        <title>Functional assignment of the ORF2-iscS-iscU-iscA-hscB-hscA-fdx-ORF3 gene cluster involved in the assembly of Fe-S clusters in Escherichia coli.</title>
        <authorList>
            <person name="Takahashi Y."/>
            <person name="Nakamura M."/>
        </authorList>
    </citation>
    <scope>FUNCTION</scope>
    <scope>PATHWAY</scope>
    <source>
        <strain>C41(DE3)</strain>
    </source>
</reference>
<reference key="9">
    <citation type="journal article" date="2000" name="J. Bacteriol.">
        <title>Contribution of cysteine desulfurase (NifS protein) to the biotin synthase reaction of Escherichia coli.</title>
        <authorList>
            <person name="Kiyasu T."/>
            <person name="Asakura A."/>
            <person name="Nagahashi Y."/>
            <person name="Hoshino T."/>
        </authorList>
    </citation>
    <scope>FUNCTION</scope>
    <source>
        <strain>ATCC 33694 / HB101</strain>
    </source>
</reference>
<reference key="10">
    <citation type="journal article" date="2000" name="J. Biol. Chem.">
        <title>The iscS gene in Escherichia coli is required for the biosynthesis of 4-thiouridine, thiamine, and NAD.</title>
        <authorList>
            <person name="Lauhon C.T."/>
            <person name="Kambampati R."/>
        </authorList>
    </citation>
    <scope>FUNCTION</scope>
    <scope>DISRUPTION PHENOTYPE</scope>
    <source>
        <strain>K12 / MC1061 / ATCC 53338 / DSM 7140</strain>
    </source>
</reference>
<reference key="11">
    <citation type="journal article" date="2000" name="J. Biol. Chem.">
        <title>Escherichia coli NifS-like proteins provide selenium in the pathway for the biosynthesis of selenophosphate.</title>
        <authorList>
            <person name="Lacourciere G.M."/>
            <person name="Mihara H."/>
            <person name="Kurihara T."/>
            <person name="Esaki N."/>
            <person name="Stadtman T.C."/>
        </authorList>
    </citation>
    <scope>FUNCTION IN SELENIUM DELIVERY</scope>
    <source>
        <strain>MBO8</strain>
    </source>
</reference>
<reference key="12">
    <citation type="journal article" date="2000" name="Proc. Natl. Acad. Sci. U.S.A.">
        <title>The cysteine desulfurase, IscS, has a major role in in vivo Fe-S cluster formation in Escherichia coli.</title>
        <authorList>
            <person name="Schwartz C.J."/>
            <person name="Djaman O."/>
            <person name="Imlay J.A."/>
            <person name="Kiley P.J."/>
        </authorList>
    </citation>
    <scope>FUNCTION</scope>
    <scope>DISRUPTION PHENOTYPE</scope>
    <source>
        <strain>K12 / MG1655 / ATCC 47076</strain>
    </source>
</reference>
<reference key="13">
    <citation type="journal article" date="2001" name="J. Biol. Chem.">
        <title>Transfer of sulfur from IscS to IscU during Fe/S cluster assembly.</title>
        <authorList>
            <person name="Urbina H.D."/>
            <person name="Silberg J.J."/>
            <person name="Hoff K.G."/>
            <person name="Vickery L.E."/>
        </authorList>
    </citation>
    <scope>FUNCTION IN SULFUR TRANSFER</scope>
    <scope>INTERACTION WITH ISCU</scope>
    <scope>ACTIVITY REGULATION</scope>
    <scope>BIOPHYSICOCHEMICAL PROPERTIES</scope>
    <scope>SUBUNIT</scope>
    <scope>DOMAIN</scope>
    <scope>MUTAGENESIS OF 376-SER--HIS-404</scope>
    <source>
        <strain>K12</strain>
    </source>
</reference>
<reference key="14">
    <citation type="journal article" date="2006" name="Mol. Cell">
        <title>Mechanistic insights into sulfur relay by multiple sulfur mediators involved in thiouridine biosynthesis at tRNA wobble positions.</title>
        <authorList>
            <person name="Ikeuchi Y."/>
            <person name="Shigi N."/>
            <person name="Kato J."/>
            <person name="Nishimura A."/>
            <person name="Suzuki T."/>
        </authorList>
    </citation>
    <scope>FUNCTION</scope>
    <scope>SUBUNIT</scope>
    <scope>ACTIVITY REGULATION</scope>
</reference>
<reference key="15">
    <citation type="journal article" date="2012" name="Proc. Natl. Acad. Sci. U.S.A.">
        <title>Disordered form of the scaffold protein IscU is the substrate for iron-sulfur cluster assembly on cysteine desulfurase.</title>
        <authorList>
            <person name="Kim J.H."/>
            <person name="Tonelli M."/>
            <person name="Markley J.L."/>
        </authorList>
    </citation>
    <scope>FUNCTION</scope>
    <scope>SUBUNIT</scope>
</reference>
<reference key="16">
    <citation type="journal article" date="2003" name="J. Mol. Biol.">
        <title>Crystal structure of IscS, a cysteine desulfurase from Escherichia coli.</title>
        <authorList>
            <person name="Cupp-Vickery J.R."/>
            <person name="Urbina H."/>
            <person name="Vickery L.E."/>
        </authorList>
    </citation>
    <scope>X-RAY CRYSTALLOGRAPHY (2.1 ANGSTROMS) IN COMPLEX WITH PYRIDOXAL PHOSPHATE</scope>
    <scope>PYRIDOXAL PHOSPHATE AT LYS-206</scope>
    <scope>COFACTOR</scope>
    <scope>SUBUNIT</scope>
    <scope>ACTIVE SITE</scope>
</reference>
<proteinExistence type="evidence at protein level"/>
<protein>
    <recommendedName>
        <fullName evidence="1 16">Cysteine desulfurase IscS</fullName>
        <ecNumber evidence="1 13">2.8.1.7</ecNumber>
    </recommendedName>
    <alternativeName>
        <fullName evidence="16">NifS protein homolog</fullName>
    </alternativeName>
    <alternativeName>
        <fullName evidence="14">ThiI transpersulfidase</fullName>
    </alternativeName>
    <alternativeName>
        <fullName evidence="15">TusA transpersulfidase</fullName>
    </alternativeName>
</protein>
<evidence type="ECO:0000255" key="1">
    <source>
        <dbReference type="HAMAP-Rule" id="MF_00331"/>
    </source>
</evidence>
<evidence type="ECO:0000269" key="2">
    <source>
    </source>
</evidence>
<evidence type="ECO:0000269" key="3">
    <source>
    </source>
</evidence>
<evidence type="ECO:0000269" key="4">
    <source>
    </source>
</evidence>
<evidence type="ECO:0000269" key="5">
    <source>
    </source>
</evidence>
<evidence type="ECO:0000269" key="6">
    <source>
    </source>
</evidence>
<evidence type="ECO:0000269" key="7">
    <source>
    </source>
</evidence>
<evidence type="ECO:0000269" key="8">
    <source>
    </source>
</evidence>
<evidence type="ECO:0000269" key="9">
    <source>
    </source>
</evidence>
<evidence type="ECO:0000269" key="10">
    <source>
    </source>
</evidence>
<evidence type="ECO:0000269" key="11">
    <source>
    </source>
</evidence>
<evidence type="ECO:0000269" key="12">
    <source>
    </source>
</evidence>
<evidence type="ECO:0000269" key="13">
    <source>
    </source>
</evidence>
<evidence type="ECO:0000303" key="14">
    <source>
    </source>
</evidence>
<evidence type="ECO:0000303" key="15">
    <source>
    </source>
</evidence>
<evidence type="ECO:0000303" key="16">
    <source>
    </source>
</evidence>
<evidence type="ECO:0000305" key="17"/>
<evidence type="ECO:0000305" key="18">
    <source>
    </source>
</evidence>
<evidence type="ECO:0007829" key="19">
    <source>
        <dbReference type="PDB" id="1P3W"/>
    </source>
</evidence>
<sequence>MKLPIYLDYSATTPVDPRVAEKMMQFMTMDGTFGNPASRSHRFGWQAEEAVDIARNQIADLVGADPREIVFTSGATESDNLAIKGAANFYQKKGKHIITSKTEHKAVLDTCRQLEREGFEVTYLAPQRNGIIDLKELEAAMRDDTILVSIMHVNNEIGVVQDIAAIGEMCRARGIIYHVDATQSVGKLPIDLSQLKVDLMSFSGHKIYGPKGIGALYVRRKPRVRIEAQMHGGGHERGMRSGTLPVHQIVGMGEAYRIAKEEMATEMERLRGLRNRLWNGIKDIEEVYLNGDLEHGAPNILNVSFNYVEGESLIMALKDLAVSSGSACTSASLEPSYVLRALGLNDELAHSSIRFSLGRFTTEEEIDYTIELVRKSIGRLRDLSPLWEMYKQGVDLNSIEWAHH</sequence>
<name>ISCS_ECOLI</name>
<comment type="function">
    <text evidence="2 3 5 6 7 8 9 11 12 13">Master enzyme that delivers sulfur to a number of partners involved in Fe-S cluster assembly, tRNA modification or cofactor biosynthesis. Catalyzes the removal of elemental sulfur from cysteine to produce alanine. Functions as a sulfur delivery protein for Fe-S cluster synthesis onto IscU, an Fe-S scaffold assembly protein, as well as other S acceptor proteins. Preferentially binds to disordered IscU on which the Fe-S is assembled, IscU converts to the structured state and then dissociates from IscS to transfer the Fe-S to an acceptor protein. Also functions as a selenium delivery protein in the pathway for the biosynthesis of selenophosphate. Transfers sulfur onto 'Cys-456' of ThiI and onto 'Cys-19' of TusA in transpersulfidation reactions.</text>
</comment>
<comment type="catalytic activity">
    <reaction evidence="1 13">
        <text>(sulfur carrier)-H + L-cysteine = (sulfur carrier)-SH + L-alanine</text>
        <dbReference type="Rhea" id="RHEA:43892"/>
        <dbReference type="Rhea" id="RHEA-COMP:14737"/>
        <dbReference type="Rhea" id="RHEA-COMP:14739"/>
        <dbReference type="ChEBI" id="CHEBI:29917"/>
        <dbReference type="ChEBI" id="CHEBI:35235"/>
        <dbReference type="ChEBI" id="CHEBI:57972"/>
        <dbReference type="ChEBI" id="CHEBI:64428"/>
        <dbReference type="EC" id="2.8.1.7"/>
    </reaction>
</comment>
<comment type="cofactor">
    <cofactor evidence="1 3 10">
        <name>pyridoxal 5'-phosphate</name>
        <dbReference type="ChEBI" id="CHEBI:597326"/>
    </cofactor>
</comment>
<comment type="activity regulation">
    <text evidence="3 9 11">Treatment with N-ethylmaleimide inhibits sulfur transfer. Activated by ThiI and TusA.</text>
</comment>
<comment type="biophysicochemical properties">
    <kinetics>
        <KM evidence="9">2.7 uM for L-cysteine</KM>
        <text evidence="9">kcat is 8.5 min(-1).</text>
    </kinetics>
</comment>
<comment type="pathway">
    <text evidence="1 18">Cofactor biosynthesis; iron-sulfur cluster biosynthesis.</text>
</comment>
<comment type="subunit">
    <text evidence="9 10 11 12">Homodimer. The homodimer interacts with IscU and TusA, other S acceptors. Each subunit of the IscS dimer contacts a IscU monomer.</text>
</comment>
<comment type="interaction">
    <interactant intactId="EBI-550055">
        <id>P0A6B7</id>
    </interactant>
    <interactant intactId="EBI-9146621">
        <id>P27838</id>
        <label>cyaY</label>
    </interactant>
    <organismsDiffer>false</organismsDiffer>
    <experiments>2</experiments>
</comment>
<comment type="interaction">
    <interactant intactId="EBI-550055">
        <id>P0A6B7</id>
    </interactant>
    <interactant intactId="EBI-767037">
        <id>P0A9R4</id>
        <label>fdx</label>
    </interactant>
    <organismsDiffer>false</organismsDiffer>
    <experiments>2</experiments>
</comment>
<comment type="interaction">
    <interactant intactId="EBI-550055">
        <id>P0A6B7</id>
    </interactant>
    <interactant intactId="EBI-561646">
        <id>P0ACD4</id>
        <label>iscU</label>
    </interactant>
    <organismsDiffer>false</organismsDiffer>
    <experiments>12</experiments>
</comment>
<comment type="interaction">
    <interactant intactId="EBI-550055">
        <id>P0A6B7</id>
    </interactant>
    <interactant intactId="EBI-561780">
        <id>P0A890</id>
        <label>tusA</label>
    </interactant>
    <organismsDiffer>false</organismsDiffer>
    <experiments>7</experiments>
</comment>
<comment type="interaction">
    <interactant intactId="EBI-550055">
        <id>P0A6B7</id>
    </interactant>
    <interactant intactId="EBI-7906952">
        <id>P52197</id>
        <label>rhdA</label>
    </interactant>
    <organismsDiffer>true</organismsDiffer>
    <experiments>2</experiments>
</comment>
<comment type="interaction">
    <interactant intactId="EBI-550055">
        <id>P0A6B7</id>
    </interactant>
    <interactant intactId="EBI-15582429">
        <id>Q1R8K8</id>
        <label>yfhJ</label>
    </interactant>
    <organismsDiffer>true</organismsDiffer>
    <experiments>2</experiments>
</comment>
<comment type="subcellular location">
    <subcellularLocation>
        <location evidence="1 17">Cytoplasm</location>
    </subcellularLocation>
</comment>
<comment type="domain">
    <text evidence="9">The C-terminus (residues 376-404) is important for interaction with IscU.</text>
</comment>
<comment type="disruption phenotype">
    <text evidence="6 8">Cells lacking this gene lose sulfurtransferase activity and require thiamine and nicotinic acid for growth. Under aerobic conditions the deletion of IscS causes an auxotrophy for thiamine and nicotinic acid, whereas under anaerobic conditions, only nicotinic acid s required.</text>
</comment>
<comment type="similarity">
    <text evidence="1">Belongs to the class-V pyridoxal-phosphate-dependent aminotransferase family. NifS/IscS subfamily.</text>
</comment>
<dbReference type="EC" id="2.8.1.7" evidence="1 13"/>
<dbReference type="EMBL" id="U00096">
    <property type="protein sequence ID" value="AAT48142.1"/>
    <property type="molecule type" value="Genomic_DNA"/>
</dbReference>
<dbReference type="EMBL" id="AP009048">
    <property type="protein sequence ID" value="BAA16424.1"/>
    <property type="molecule type" value="Genomic_DNA"/>
</dbReference>
<dbReference type="RefSeq" id="WP_001295373.1">
    <property type="nucleotide sequence ID" value="NZ_STEB01000011.1"/>
</dbReference>
<dbReference type="RefSeq" id="YP_026169.1">
    <property type="nucleotide sequence ID" value="NC_000913.3"/>
</dbReference>
<dbReference type="PDB" id="1P3W">
    <property type="method" value="X-ray"/>
    <property type="resolution" value="2.10 A"/>
    <property type="chains" value="A/B=1-404"/>
</dbReference>
<dbReference type="PDBsum" id="1P3W"/>
<dbReference type="SASBDB" id="P0A6B7"/>
<dbReference type="SMR" id="P0A6B7"/>
<dbReference type="BioGRID" id="4263511">
    <property type="interactions" value="617"/>
</dbReference>
<dbReference type="BioGRID" id="851343">
    <property type="interactions" value="3"/>
</dbReference>
<dbReference type="ComplexPortal" id="CPX-2136">
    <property type="entry name" value="L-cysteine desulfurase complex"/>
</dbReference>
<dbReference type="ComplexPortal" id="CPX-2139">
    <property type="entry name" value="iscS-tusA cysteine desulfurase complex"/>
</dbReference>
<dbReference type="ComplexPortal" id="CPX-2140">
    <property type="entry name" value="iscS-thiI sulfurtransferase complex"/>
</dbReference>
<dbReference type="ComplexPortal" id="CPX-2141">
    <property type="entry name" value="iscS-iscU iron-sulfur cluster assembly complex"/>
</dbReference>
<dbReference type="DIP" id="DIP-29109N"/>
<dbReference type="FunCoup" id="P0A6B7">
    <property type="interactions" value="882"/>
</dbReference>
<dbReference type="IntAct" id="P0A6B7">
    <property type="interactions" value="47"/>
</dbReference>
<dbReference type="MINT" id="P0A6B7"/>
<dbReference type="STRING" id="511145.b2530"/>
<dbReference type="jPOST" id="P0A6B7"/>
<dbReference type="PaxDb" id="511145-b2530"/>
<dbReference type="EnsemblBacteria" id="AAT48142">
    <property type="protein sequence ID" value="AAT48142"/>
    <property type="gene ID" value="b2530"/>
</dbReference>
<dbReference type="GeneID" id="93774606"/>
<dbReference type="GeneID" id="947004"/>
<dbReference type="KEGG" id="ecj:JW2514"/>
<dbReference type="KEGG" id="eco:b2530"/>
<dbReference type="KEGG" id="ecoc:C3026_14020"/>
<dbReference type="PATRIC" id="fig|1411691.4.peg.4204"/>
<dbReference type="EchoBASE" id="EB2542"/>
<dbReference type="eggNOG" id="COG1104">
    <property type="taxonomic scope" value="Bacteria"/>
</dbReference>
<dbReference type="HOGENOM" id="CLU_003433_0_2_6"/>
<dbReference type="InParanoid" id="P0A6B7"/>
<dbReference type="OMA" id="KGLYWAR"/>
<dbReference type="OrthoDB" id="9808002at2"/>
<dbReference type="PhylomeDB" id="P0A6B7"/>
<dbReference type="BioCyc" id="EcoCyc:G7325-MONOMER"/>
<dbReference type="BioCyc" id="MetaCyc:G7325-MONOMER"/>
<dbReference type="SABIO-RK" id="P0A6B7"/>
<dbReference type="UniPathway" id="UPA00266"/>
<dbReference type="EvolutionaryTrace" id="P0A6B7"/>
<dbReference type="PRO" id="PR:P0A6B7"/>
<dbReference type="Proteomes" id="UP000000625">
    <property type="component" value="Chromosome"/>
</dbReference>
<dbReference type="GO" id="GO:0005829">
    <property type="term" value="C:cytosol"/>
    <property type="evidence" value="ECO:0000314"/>
    <property type="project" value="EcoCyc"/>
</dbReference>
<dbReference type="GO" id="GO:1990330">
    <property type="term" value="C:IscS-IscU complex"/>
    <property type="evidence" value="ECO:0000303"/>
    <property type="project" value="ComplexPortal"/>
</dbReference>
<dbReference type="GO" id="GO:1990329">
    <property type="term" value="C:IscS-TusA complex"/>
    <property type="evidence" value="ECO:0000353"/>
    <property type="project" value="ComplexPortal"/>
</dbReference>
<dbReference type="GO" id="GO:1990221">
    <property type="term" value="C:L-cysteine desulfurase complex"/>
    <property type="evidence" value="ECO:0000353"/>
    <property type="project" value="ComplexPortal"/>
</dbReference>
<dbReference type="GO" id="GO:1990228">
    <property type="term" value="C:sulfurtransferase complex"/>
    <property type="evidence" value="ECO:0000353"/>
    <property type="project" value="ComplexPortal"/>
</dbReference>
<dbReference type="GO" id="GO:0051537">
    <property type="term" value="F:2 iron, 2 sulfur cluster binding"/>
    <property type="evidence" value="ECO:0007669"/>
    <property type="project" value="UniProtKB-UniRule"/>
</dbReference>
<dbReference type="GO" id="GO:0031071">
    <property type="term" value="F:cysteine desulfurase activity"/>
    <property type="evidence" value="ECO:0000314"/>
    <property type="project" value="EcoCyc"/>
</dbReference>
<dbReference type="GO" id="GO:0046872">
    <property type="term" value="F:metal ion binding"/>
    <property type="evidence" value="ECO:0007669"/>
    <property type="project" value="UniProtKB-KW"/>
</dbReference>
<dbReference type="GO" id="GO:0030170">
    <property type="term" value="F:pyridoxal phosphate binding"/>
    <property type="evidence" value="ECO:0000314"/>
    <property type="project" value="EcoCyc"/>
</dbReference>
<dbReference type="GO" id="GO:0009000">
    <property type="term" value="F:selenocysteine lyase activity"/>
    <property type="evidence" value="ECO:0000314"/>
    <property type="project" value="EcoCyc"/>
</dbReference>
<dbReference type="GO" id="GO:0097163">
    <property type="term" value="F:sulfur carrier activity"/>
    <property type="evidence" value="ECO:0000269"/>
    <property type="project" value="EcoCyc"/>
</dbReference>
<dbReference type="GO" id="GO:0044571">
    <property type="term" value="P:[2Fe-2S] cluster assembly"/>
    <property type="evidence" value="ECO:0007669"/>
    <property type="project" value="UniProtKB-UniRule"/>
</dbReference>
<dbReference type="GO" id="GO:0009589">
    <property type="term" value="P:detection of UV"/>
    <property type="evidence" value="ECO:0000303"/>
    <property type="project" value="ComplexPortal"/>
</dbReference>
<dbReference type="GO" id="GO:0016226">
    <property type="term" value="P:iron-sulfur cluster assembly"/>
    <property type="evidence" value="ECO:0000315"/>
    <property type="project" value="EcoCyc"/>
</dbReference>
<dbReference type="GO" id="GO:0019448">
    <property type="term" value="P:L-cysteine catabolic process"/>
    <property type="evidence" value="ECO:0000314"/>
    <property type="project" value="ComplexPortal"/>
</dbReference>
<dbReference type="GO" id="GO:0018131">
    <property type="term" value="P:oxazole or thiazole biosynthetic process"/>
    <property type="evidence" value="ECO:0000315"/>
    <property type="project" value="EcoCyc"/>
</dbReference>
<dbReference type="GO" id="GO:0016261">
    <property type="term" value="P:selenocysteine catabolic process"/>
    <property type="evidence" value="ECO:0000314"/>
    <property type="project" value="ComplexPortal"/>
</dbReference>
<dbReference type="GO" id="GO:0072348">
    <property type="term" value="P:sulfur compound transport"/>
    <property type="evidence" value="ECO:0000314"/>
    <property type="project" value="ComplexPortal"/>
</dbReference>
<dbReference type="GO" id="GO:0009228">
    <property type="term" value="P:thiamine biosynthetic process"/>
    <property type="evidence" value="ECO:0000303"/>
    <property type="project" value="ComplexPortal"/>
</dbReference>
<dbReference type="GO" id="GO:0002937">
    <property type="term" value="P:tRNA 4-thiouridine biosynthesis"/>
    <property type="evidence" value="ECO:0000315"/>
    <property type="project" value="EcoCyc"/>
</dbReference>
<dbReference type="GO" id="GO:0002143">
    <property type="term" value="P:tRNA wobble position uridine thiolation"/>
    <property type="evidence" value="ECO:0000314"/>
    <property type="project" value="ComplexPortal"/>
</dbReference>
<dbReference type="FunFam" id="3.40.640.10:FF:000003">
    <property type="entry name" value="Cysteine desulfurase IscS"/>
    <property type="match status" value="1"/>
</dbReference>
<dbReference type="FunFam" id="3.90.1150.10:FF:000002">
    <property type="entry name" value="Cysteine desulfurase IscS"/>
    <property type="match status" value="1"/>
</dbReference>
<dbReference type="Gene3D" id="3.90.1150.10">
    <property type="entry name" value="Aspartate Aminotransferase, domain 1"/>
    <property type="match status" value="1"/>
</dbReference>
<dbReference type="Gene3D" id="3.40.640.10">
    <property type="entry name" value="Type I PLP-dependent aspartate aminotransferase-like (Major domain)"/>
    <property type="match status" value="1"/>
</dbReference>
<dbReference type="HAMAP" id="MF_00331">
    <property type="entry name" value="Cys_desulf_IscS"/>
    <property type="match status" value="1"/>
</dbReference>
<dbReference type="InterPro" id="IPR000192">
    <property type="entry name" value="Aminotrans_V_dom"/>
</dbReference>
<dbReference type="InterPro" id="IPR020578">
    <property type="entry name" value="Aminotrans_V_PyrdxlP_BS"/>
</dbReference>
<dbReference type="InterPro" id="IPR010240">
    <property type="entry name" value="Cys_deSase_IscS"/>
</dbReference>
<dbReference type="InterPro" id="IPR016454">
    <property type="entry name" value="Cysteine_dSase"/>
</dbReference>
<dbReference type="InterPro" id="IPR015424">
    <property type="entry name" value="PyrdxlP-dep_Trfase"/>
</dbReference>
<dbReference type="InterPro" id="IPR015421">
    <property type="entry name" value="PyrdxlP-dep_Trfase_major"/>
</dbReference>
<dbReference type="InterPro" id="IPR015422">
    <property type="entry name" value="PyrdxlP-dep_Trfase_small"/>
</dbReference>
<dbReference type="NCBIfam" id="TIGR02006">
    <property type="entry name" value="IscS"/>
    <property type="match status" value="1"/>
</dbReference>
<dbReference type="NCBIfam" id="NF002806">
    <property type="entry name" value="PRK02948.1"/>
    <property type="match status" value="1"/>
</dbReference>
<dbReference type="NCBIfam" id="NF010611">
    <property type="entry name" value="PRK14012.1"/>
    <property type="match status" value="1"/>
</dbReference>
<dbReference type="PANTHER" id="PTHR11601:SF34">
    <property type="entry name" value="CYSTEINE DESULFURASE"/>
    <property type="match status" value="1"/>
</dbReference>
<dbReference type="PANTHER" id="PTHR11601">
    <property type="entry name" value="CYSTEINE DESULFURYLASE FAMILY MEMBER"/>
    <property type="match status" value="1"/>
</dbReference>
<dbReference type="Pfam" id="PF00266">
    <property type="entry name" value="Aminotran_5"/>
    <property type="match status" value="1"/>
</dbReference>
<dbReference type="PIRSF" id="PIRSF005572">
    <property type="entry name" value="NifS"/>
    <property type="match status" value="1"/>
</dbReference>
<dbReference type="SUPFAM" id="SSF53383">
    <property type="entry name" value="PLP-dependent transferases"/>
    <property type="match status" value="1"/>
</dbReference>
<dbReference type="PROSITE" id="PS00595">
    <property type="entry name" value="AA_TRANSFER_CLASS_5"/>
    <property type="match status" value="1"/>
</dbReference>